<proteinExistence type="inferred from homology"/>
<organism>
    <name type="scientific">Bordetella bronchiseptica (strain ATCC BAA-588 / NCTC 13252 / RB50)</name>
    <name type="common">Alcaligenes bronchisepticus</name>
    <dbReference type="NCBI Taxonomy" id="257310"/>
    <lineage>
        <taxon>Bacteria</taxon>
        <taxon>Pseudomonadati</taxon>
        <taxon>Pseudomonadota</taxon>
        <taxon>Betaproteobacteria</taxon>
        <taxon>Burkholderiales</taxon>
        <taxon>Alcaligenaceae</taxon>
        <taxon>Bordetella</taxon>
    </lineage>
</organism>
<reference key="1">
    <citation type="journal article" date="2003" name="Nat. Genet.">
        <title>Comparative analysis of the genome sequences of Bordetella pertussis, Bordetella parapertussis and Bordetella bronchiseptica.</title>
        <authorList>
            <person name="Parkhill J."/>
            <person name="Sebaihia M."/>
            <person name="Preston A."/>
            <person name="Murphy L.D."/>
            <person name="Thomson N.R."/>
            <person name="Harris D.E."/>
            <person name="Holden M.T.G."/>
            <person name="Churcher C.M."/>
            <person name="Bentley S.D."/>
            <person name="Mungall K.L."/>
            <person name="Cerdeno-Tarraga A.-M."/>
            <person name="Temple L."/>
            <person name="James K.D."/>
            <person name="Harris B."/>
            <person name="Quail M.A."/>
            <person name="Achtman M."/>
            <person name="Atkin R."/>
            <person name="Baker S."/>
            <person name="Basham D."/>
            <person name="Bason N."/>
            <person name="Cherevach I."/>
            <person name="Chillingworth T."/>
            <person name="Collins M."/>
            <person name="Cronin A."/>
            <person name="Davis P."/>
            <person name="Doggett J."/>
            <person name="Feltwell T."/>
            <person name="Goble A."/>
            <person name="Hamlin N."/>
            <person name="Hauser H."/>
            <person name="Holroyd S."/>
            <person name="Jagels K."/>
            <person name="Leather S."/>
            <person name="Moule S."/>
            <person name="Norberczak H."/>
            <person name="O'Neil S."/>
            <person name="Ormond D."/>
            <person name="Price C."/>
            <person name="Rabbinowitsch E."/>
            <person name="Rutter S."/>
            <person name="Sanders M."/>
            <person name="Saunders D."/>
            <person name="Seeger K."/>
            <person name="Sharp S."/>
            <person name="Simmonds M."/>
            <person name="Skelton J."/>
            <person name="Squares R."/>
            <person name="Squares S."/>
            <person name="Stevens K."/>
            <person name="Unwin L."/>
            <person name="Whitehead S."/>
            <person name="Barrell B.G."/>
            <person name="Maskell D.J."/>
        </authorList>
    </citation>
    <scope>NUCLEOTIDE SEQUENCE [LARGE SCALE GENOMIC DNA]</scope>
    <source>
        <strain>ATCC BAA-588 / NCTC 13252 / RB50</strain>
    </source>
</reference>
<evidence type="ECO:0000255" key="1">
    <source>
        <dbReference type="HAMAP-Rule" id="MF_00149"/>
    </source>
</evidence>
<evidence type="ECO:0000256" key="2">
    <source>
        <dbReference type="SAM" id="MobiDB-lite"/>
    </source>
</evidence>
<gene>
    <name evidence="1" type="primary">mutL</name>
    <name type="ordered locus">BB4058</name>
</gene>
<accession>Q7WG61</accession>
<sequence>MSDRRPIATLPDLLISQIAAGEVIERPASVLKEILENAIDAGARAIEVRLEGGGIRRIAVTDDGSGIPPEELPLALTRHATSKIRSLDELESVASMGFRGEALASIASVADLTIISRTRGAEHAWQIDGGSLQVSPASGPPGTTIDVRQLFDRVPARRKFLRSEATEFGHCVDAMERIALAHPEVAFRLFHHDRAQRQWLPADHGQRIRDVLGAEFVGHVLPVQAAAGAIALMGMVTRPTAARARADRQYLYVNGRFVRDRTVSHALRSAYADVLHGDRQPAYVLYLDIDPGAVDVNVHPAKHEVRFRDSGAVHRFVSQVVGQTLAQTGGAEAVPAGVPDGAAPDAAYAGEPAAAAPGLAEPRAPYPAAYPSPGQSPYQGSPARPHTQVPFRLHGEPAGIPATDWQSLYRPLPGDAAPAATALRAAPATPLPTADEHPLGQALAQLHGIYILAQNSRGLVLVDMHAAHERVVYEQLKRALDDRALPRQDLLVPVVFHAAEKDVALVEEHETQLNELGFEMRPSGPASIAVRSVPALLARGDIESLARAVLRDLGAVGVSRLLTEQRNELLSTMACHGSVRANRRLTLEEMNALLRQMEITERADQCNHGRPTWVQWSVNDLDKLFLRGQ</sequence>
<name>MUTL_BORBR</name>
<feature type="chain" id="PRO_1000009990" description="DNA mismatch repair protein MutL">
    <location>
        <begin position="1"/>
        <end position="629"/>
    </location>
</feature>
<feature type="region of interest" description="Disordered" evidence="2">
    <location>
        <begin position="364"/>
        <end position="388"/>
    </location>
</feature>
<feature type="compositionally biased region" description="Low complexity" evidence="2">
    <location>
        <begin position="371"/>
        <end position="382"/>
    </location>
</feature>
<keyword id="KW-0227">DNA damage</keyword>
<keyword id="KW-0234">DNA repair</keyword>
<dbReference type="EMBL" id="BX640449">
    <property type="protein sequence ID" value="CAE34421.1"/>
    <property type="molecule type" value="Genomic_DNA"/>
</dbReference>
<dbReference type="RefSeq" id="WP_003814334.1">
    <property type="nucleotide sequence ID" value="NC_002927.3"/>
</dbReference>
<dbReference type="SMR" id="Q7WG61"/>
<dbReference type="GeneID" id="56477442"/>
<dbReference type="KEGG" id="bbr:BB4058"/>
<dbReference type="eggNOG" id="COG0323">
    <property type="taxonomic scope" value="Bacteria"/>
</dbReference>
<dbReference type="HOGENOM" id="CLU_004131_4_2_4"/>
<dbReference type="Proteomes" id="UP000001027">
    <property type="component" value="Chromosome"/>
</dbReference>
<dbReference type="GO" id="GO:0032300">
    <property type="term" value="C:mismatch repair complex"/>
    <property type="evidence" value="ECO:0007669"/>
    <property type="project" value="InterPro"/>
</dbReference>
<dbReference type="GO" id="GO:0005524">
    <property type="term" value="F:ATP binding"/>
    <property type="evidence" value="ECO:0007669"/>
    <property type="project" value="InterPro"/>
</dbReference>
<dbReference type="GO" id="GO:0016887">
    <property type="term" value="F:ATP hydrolysis activity"/>
    <property type="evidence" value="ECO:0007669"/>
    <property type="project" value="InterPro"/>
</dbReference>
<dbReference type="GO" id="GO:0140664">
    <property type="term" value="F:ATP-dependent DNA damage sensor activity"/>
    <property type="evidence" value="ECO:0007669"/>
    <property type="project" value="InterPro"/>
</dbReference>
<dbReference type="GO" id="GO:0030983">
    <property type="term" value="F:mismatched DNA binding"/>
    <property type="evidence" value="ECO:0007669"/>
    <property type="project" value="InterPro"/>
</dbReference>
<dbReference type="GO" id="GO:0006298">
    <property type="term" value="P:mismatch repair"/>
    <property type="evidence" value="ECO:0007669"/>
    <property type="project" value="UniProtKB-UniRule"/>
</dbReference>
<dbReference type="CDD" id="cd16926">
    <property type="entry name" value="HATPase_MutL-MLH-PMS-like"/>
    <property type="match status" value="1"/>
</dbReference>
<dbReference type="CDD" id="cd03482">
    <property type="entry name" value="MutL_Trans_MutL"/>
    <property type="match status" value="1"/>
</dbReference>
<dbReference type="FunFam" id="3.30.565.10:FF:000003">
    <property type="entry name" value="DNA mismatch repair endonuclease MutL"/>
    <property type="match status" value="1"/>
</dbReference>
<dbReference type="Gene3D" id="3.30.230.10">
    <property type="match status" value="1"/>
</dbReference>
<dbReference type="Gene3D" id="3.30.565.10">
    <property type="entry name" value="Histidine kinase-like ATPase, C-terminal domain"/>
    <property type="match status" value="1"/>
</dbReference>
<dbReference type="Gene3D" id="3.30.1540.20">
    <property type="entry name" value="MutL, C-terminal domain, dimerisation subdomain"/>
    <property type="match status" value="1"/>
</dbReference>
<dbReference type="Gene3D" id="3.30.1370.100">
    <property type="entry name" value="MutL, C-terminal domain, regulatory subdomain"/>
    <property type="match status" value="1"/>
</dbReference>
<dbReference type="HAMAP" id="MF_00149">
    <property type="entry name" value="DNA_mis_repair"/>
    <property type="match status" value="1"/>
</dbReference>
<dbReference type="InterPro" id="IPR014762">
    <property type="entry name" value="DNA_mismatch_repair_CS"/>
</dbReference>
<dbReference type="InterPro" id="IPR020667">
    <property type="entry name" value="DNA_mismatch_repair_MutL"/>
</dbReference>
<dbReference type="InterPro" id="IPR013507">
    <property type="entry name" value="DNA_mismatch_S5_2-like"/>
</dbReference>
<dbReference type="InterPro" id="IPR036890">
    <property type="entry name" value="HATPase_C_sf"/>
</dbReference>
<dbReference type="InterPro" id="IPR002099">
    <property type="entry name" value="MutL/Mlh/PMS"/>
</dbReference>
<dbReference type="InterPro" id="IPR038973">
    <property type="entry name" value="MutL/Mlh/Pms-like"/>
</dbReference>
<dbReference type="InterPro" id="IPR014790">
    <property type="entry name" value="MutL_C"/>
</dbReference>
<dbReference type="InterPro" id="IPR042120">
    <property type="entry name" value="MutL_C_dimsub"/>
</dbReference>
<dbReference type="InterPro" id="IPR042121">
    <property type="entry name" value="MutL_C_regsub"/>
</dbReference>
<dbReference type="InterPro" id="IPR037198">
    <property type="entry name" value="MutL_C_sf"/>
</dbReference>
<dbReference type="InterPro" id="IPR020568">
    <property type="entry name" value="Ribosomal_Su5_D2-typ_SF"/>
</dbReference>
<dbReference type="InterPro" id="IPR014721">
    <property type="entry name" value="Ribsml_uS5_D2-typ_fold_subgr"/>
</dbReference>
<dbReference type="NCBIfam" id="TIGR00585">
    <property type="entry name" value="mutl"/>
    <property type="match status" value="1"/>
</dbReference>
<dbReference type="NCBIfam" id="NF000949">
    <property type="entry name" value="PRK00095.1-2"/>
    <property type="match status" value="1"/>
</dbReference>
<dbReference type="PANTHER" id="PTHR10073">
    <property type="entry name" value="DNA MISMATCH REPAIR PROTEIN MLH, PMS, MUTL"/>
    <property type="match status" value="1"/>
</dbReference>
<dbReference type="PANTHER" id="PTHR10073:SF12">
    <property type="entry name" value="DNA MISMATCH REPAIR PROTEIN MLH1"/>
    <property type="match status" value="1"/>
</dbReference>
<dbReference type="Pfam" id="PF01119">
    <property type="entry name" value="DNA_mis_repair"/>
    <property type="match status" value="1"/>
</dbReference>
<dbReference type="Pfam" id="PF13589">
    <property type="entry name" value="HATPase_c_3"/>
    <property type="match status" value="1"/>
</dbReference>
<dbReference type="Pfam" id="PF08676">
    <property type="entry name" value="MutL_C"/>
    <property type="match status" value="1"/>
</dbReference>
<dbReference type="SMART" id="SM01340">
    <property type="entry name" value="DNA_mis_repair"/>
    <property type="match status" value="1"/>
</dbReference>
<dbReference type="SMART" id="SM00853">
    <property type="entry name" value="MutL_C"/>
    <property type="match status" value="1"/>
</dbReference>
<dbReference type="SUPFAM" id="SSF55874">
    <property type="entry name" value="ATPase domain of HSP90 chaperone/DNA topoisomerase II/histidine kinase"/>
    <property type="match status" value="1"/>
</dbReference>
<dbReference type="SUPFAM" id="SSF118116">
    <property type="entry name" value="DNA mismatch repair protein MutL"/>
    <property type="match status" value="1"/>
</dbReference>
<dbReference type="SUPFAM" id="SSF54211">
    <property type="entry name" value="Ribosomal protein S5 domain 2-like"/>
    <property type="match status" value="1"/>
</dbReference>
<dbReference type="PROSITE" id="PS00058">
    <property type="entry name" value="DNA_MISMATCH_REPAIR_1"/>
    <property type="match status" value="1"/>
</dbReference>
<comment type="function">
    <text evidence="1">This protein is involved in the repair of mismatches in DNA. It is required for dam-dependent methyl-directed DNA mismatch repair. May act as a 'molecular matchmaker', a protein that promotes the formation of a stable complex between two or more DNA-binding proteins in an ATP-dependent manner without itself being part of a final effector complex.</text>
</comment>
<comment type="similarity">
    <text evidence="1">Belongs to the DNA mismatch repair MutL/HexB family.</text>
</comment>
<protein>
    <recommendedName>
        <fullName evidence="1">DNA mismatch repair protein MutL</fullName>
    </recommendedName>
</protein>